<comment type="subunit">
    <text>Heterotetramer of two type I and two type II keratins. Keratin-3 associates with keratin-12.</text>
</comment>
<comment type="interaction">
    <interactant intactId="EBI-2430095">
        <id>P12035</id>
    </interactant>
    <interactant intactId="EBI-953896">
        <id>Q9NP55</id>
        <label>BPIFA1</label>
    </interactant>
    <organismsDiffer>false</organismsDiffer>
    <experiments>3</experiments>
</comment>
<comment type="interaction">
    <interactant intactId="EBI-2430095">
        <id>P12035</id>
    </interactant>
    <interactant intactId="EBI-2837036">
        <id>Q6ZUJ4</id>
        <label>C3orf62</label>
    </interactant>
    <organismsDiffer>false</organismsDiffer>
    <experiments>3</experiments>
</comment>
<comment type="interaction">
    <interactant intactId="EBI-2430095">
        <id>P12035</id>
    </interactant>
    <interactant intactId="EBI-750686">
        <id>Q8NCU1</id>
        <label>CCDC197</label>
    </interactant>
    <organismsDiffer>false</organismsDiffer>
    <experiments>3</experiments>
</comment>
<comment type="interaction">
    <interactant intactId="EBI-2430095">
        <id>P12035</id>
    </interactant>
    <interactant intactId="EBI-748597">
        <id>Q05D60</id>
        <label>DEUP1</label>
    </interactant>
    <organismsDiffer>false</organismsDiffer>
    <experiments>3</experiments>
</comment>
<comment type="interaction">
    <interactant intactId="EBI-2430095">
        <id>P12035</id>
    </interactant>
    <interactant intactId="EBI-2514791">
        <id>Q96CS2</id>
        <label>HAUS1</label>
    </interactant>
    <organismsDiffer>false</organismsDiffer>
    <experiments>3</experiments>
</comment>
<comment type="interaction">
    <interactant intactId="EBI-2430095">
        <id>P12035</id>
    </interactant>
    <interactant intactId="EBI-740220">
        <id>O14964</id>
        <label>HGS</label>
    </interactant>
    <organismsDiffer>false</organismsDiffer>
    <experiments>3</experiments>
</comment>
<comment type="interaction">
    <interactant intactId="EBI-2430095">
        <id>P12035</id>
    </interactant>
    <interactant intactId="EBI-14069005">
        <id>Q9BVG8-5</id>
        <label>KIFC3</label>
    </interactant>
    <organismsDiffer>false</organismsDiffer>
    <experiments>3</experiments>
</comment>
<comment type="interaction">
    <interactant intactId="EBI-2430095">
        <id>P12035</id>
    </interactant>
    <interactant intactId="EBI-702178">
        <id>P02533</id>
        <label>KRT14</label>
    </interactant>
    <organismsDiffer>false</organismsDiffer>
    <experiments>3</experiments>
</comment>
<comment type="interaction">
    <interactant intactId="EBI-2430095">
        <id>P12035</id>
    </interactant>
    <interactant intactId="EBI-356410">
        <id>P08779</id>
        <label>KRT16</label>
    </interactant>
    <organismsDiffer>false</organismsDiffer>
    <experiments>3</experiments>
</comment>
<comment type="interaction">
    <interactant intactId="EBI-2430095">
        <id>P12035</id>
    </interactant>
    <interactant intactId="EBI-742756">
        <id>P08727</id>
        <label>KRT19</label>
    </interactant>
    <organismsDiffer>false</organismsDiffer>
    <experiments>3</experiments>
</comment>
<comment type="interaction">
    <interactant intactId="EBI-2430095">
        <id>P12035</id>
    </interactant>
    <interactant intactId="EBI-742094">
        <id>P35900</id>
        <label>KRT20</label>
    </interactant>
    <organismsDiffer>false</organismsDiffer>
    <experiments>3</experiments>
</comment>
<comment type="interaction">
    <interactant intactId="EBI-2430095">
        <id>P12035</id>
    </interactant>
    <interactant intactId="EBI-2952736">
        <id>Q2M2I5</id>
        <label>KRT24</label>
    </interactant>
    <organismsDiffer>false</organismsDiffer>
    <experiments>3</experiments>
</comment>
<comment type="interaction">
    <interactant intactId="EBI-2430095">
        <id>P12035</id>
    </interactant>
    <interactant intactId="EBI-11980019">
        <id>Q7Z3Z0</id>
        <label>KRT25</label>
    </interactant>
    <organismsDiffer>false</organismsDiffer>
    <experiments>3</experiments>
</comment>
<comment type="interaction">
    <interactant intactId="EBI-2430095">
        <id>P12035</id>
    </interactant>
    <interactant intactId="EBI-12084444">
        <id>Q7Z3Y9</id>
        <label>KRT26</label>
    </interactant>
    <organismsDiffer>false</organismsDiffer>
    <experiments>3</experiments>
</comment>
<comment type="interaction">
    <interactant intactId="EBI-2430095">
        <id>P12035</id>
    </interactant>
    <interactant intactId="EBI-3044087">
        <id>Q7Z3Y8</id>
        <label>KRT27</label>
    </interactant>
    <organismsDiffer>false</organismsDiffer>
    <experiments>3</experiments>
</comment>
<comment type="interaction">
    <interactant intactId="EBI-2430095">
        <id>P12035</id>
    </interactant>
    <interactant intactId="EBI-11980489">
        <id>Q7Z3Y7</id>
        <label>KRT28</label>
    </interactant>
    <organismsDiffer>false</organismsDiffer>
    <experiments>5</experiments>
</comment>
<comment type="interaction">
    <interactant intactId="EBI-2430095">
        <id>P12035</id>
    </interactant>
    <interactant intactId="EBI-948001">
        <id>Q15323</id>
        <label>KRT31</label>
    </interactant>
    <organismsDiffer>false</organismsDiffer>
    <experiments>3</experiments>
</comment>
<comment type="interaction">
    <interactant intactId="EBI-2430095">
        <id>P12035</id>
    </interactant>
    <interactant intactId="EBI-1049638">
        <id>Q14525</id>
        <label>KRT33B</label>
    </interactant>
    <organismsDiffer>false</organismsDiffer>
    <experiments>3</experiments>
</comment>
<comment type="interaction">
    <interactant intactId="EBI-2430095">
        <id>P12035</id>
    </interactant>
    <interactant intactId="EBI-1047093">
        <id>O76011</id>
        <label>KRT34</label>
    </interactant>
    <organismsDiffer>false</organismsDiffer>
    <experiments>5</experiments>
</comment>
<comment type="interaction">
    <interactant intactId="EBI-2430095">
        <id>P12035</id>
    </interactant>
    <interactant intactId="EBI-1058674">
        <id>Q92764</id>
        <label>KRT35</label>
    </interactant>
    <organismsDiffer>false</organismsDiffer>
    <experiments>3</experiments>
</comment>
<comment type="interaction">
    <interactant intactId="EBI-2430095">
        <id>P12035</id>
    </interactant>
    <interactant intactId="EBI-11958506">
        <id>O76013-2</id>
        <label>KRT36</label>
    </interactant>
    <organismsDiffer>false</organismsDiffer>
    <experiments>5</experiments>
</comment>
<comment type="interaction">
    <interactant intactId="EBI-2430095">
        <id>P12035</id>
    </interactant>
    <interactant intactId="EBI-1045716">
        <id>O76014</id>
        <label>KRT37</label>
    </interactant>
    <organismsDiffer>false</organismsDiffer>
    <experiments>3</experiments>
</comment>
<comment type="interaction">
    <interactant intactId="EBI-2430095">
        <id>P12035</id>
    </interactant>
    <interactant intactId="EBI-1047263">
        <id>O76015</id>
        <label>KRT38</label>
    </interactant>
    <organismsDiffer>false</organismsDiffer>
    <experiments>3</experiments>
</comment>
<comment type="interaction">
    <interactant intactId="EBI-2430095">
        <id>P12035</id>
    </interactant>
    <interactant intactId="EBI-11958242">
        <id>Q6A163</id>
        <label>KRT39</label>
    </interactant>
    <organismsDiffer>false</organismsDiffer>
    <experiments>3</experiments>
</comment>
<comment type="interaction">
    <interactant intactId="EBI-2430095">
        <id>P12035</id>
    </interactant>
    <interactant intactId="EBI-2949715">
        <id>O95678</id>
        <label>KRT75</label>
    </interactant>
    <organismsDiffer>false</organismsDiffer>
    <experiments>3</experiments>
</comment>
<comment type="interaction">
    <interactant intactId="EBI-2430095">
        <id>P12035</id>
    </interactant>
    <interactant intactId="EBI-11953846">
        <id>Q52LG2</id>
        <label>KRTAP13-2</label>
    </interactant>
    <organismsDiffer>false</organismsDiffer>
    <experiments>3</experiments>
</comment>
<comment type="interaction">
    <interactant intactId="EBI-2430095">
        <id>P12035</id>
    </interactant>
    <interactant intactId="EBI-12039345">
        <id>Q9UBR4-2</id>
        <label>LHX3</label>
    </interactant>
    <organismsDiffer>false</organismsDiffer>
    <experiments>3</experiments>
</comment>
<comment type="interaction">
    <interactant intactId="EBI-2430095">
        <id>P12035</id>
    </interactant>
    <interactant intactId="EBI-741355">
        <id>Q96LR2</id>
        <label>LURAP1</label>
    </interactant>
    <organismsDiffer>false</organismsDiffer>
    <experiments>3</experiments>
</comment>
<comment type="interaction">
    <interactant intactId="EBI-2430095">
        <id>P12035</id>
    </interactant>
    <interactant intactId="EBI-347978">
        <id>P37198</id>
        <label>NUP62</label>
    </interactant>
    <organismsDiffer>false</organismsDiffer>
    <experiments>3</experiments>
</comment>
<comment type="interaction">
    <interactant intactId="EBI-2430095">
        <id>P12035</id>
    </interactant>
    <interactant intactId="EBI-536879">
        <id>O43482</id>
        <label>OIP5</label>
    </interactant>
    <organismsDiffer>false</organismsDiffer>
    <experiments>3</experiments>
</comment>
<comment type="interaction">
    <interactant intactId="EBI-2430095">
        <id>P12035</id>
    </interactant>
    <interactant intactId="EBI-949255">
        <id>Q58EX7</id>
        <label>PLEKHG4</label>
    </interactant>
    <organismsDiffer>false</organismsDiffer>
    <experiments>3</experiments>
</comment>
<comment type="interaction">
    <interactant intactId="EBI-2430095">
        <id>P12035</id>
    </interactant>
    <interactant intactId="EBI-2561646">
        <id>Q86UD0</id>
        <label>SAPCD2</label>
    </interactant>
    <organismsDiffer>false</organismsDiffer>
    <experiments>3</experiments>
</comment>
<comment type="interaction">
    <interactant intactId="EBI-2430095">
        <id>P12035</id>
    </interactant>
    <interactant intactId="EBI-413317">
        <id>Q96R06</id>
        <label>SPAG5</label>
    </interactant>
    <organismsDiffer>false</organismsDiffer>
    <experiments>3</experiments>
</comment>
<comment type="interaction">
    <interactant intactId="EBI-2430095">
        <id>P12035</id>
    </interactant>
    <interactant intactId="EBI-359224">
        <id>Q13077</id>
        <label>TRAF1</label>
    </interactant>
    <organismsDiffer>false</organismsDiffer>
    <experiments>3</experiments>
</comment>
<comment type="interaction">
    <interactant intactId="EBI-2430095">
        <id>P12035</id>
    </interactant>
    <interactant intactId="EBI-719493">
        <id>P14373</id>
        <label>TRIM27</label>
    </interactant>
    <organismsDiffer>false</organismsDiffer>
    <experiments>3</experiments>
</comment>
<comment type="interaction">
    <interactant intactId="EBI-2430095">
        <id>P12035</id>
    </interactant>
    <interactant intactId="EBI-2130429">
        <id>Q9BYV2</id>
        <label>TRIM54</label>
    </interactant>
    <organismsDiffer>false</organismsDiffer>
    <experiments>3</experiments>
</comment>
<comment type="interaction">
    <interactant intactId="EBI-2430095">
        <id>P12035</id>
    </interactant>
    <interactant intactId="EBI-12040603">
        <id>Q9NZC7-5</id>
        <label>WWOX</label>
    </interactant>
    <organismsDiffer>false</organismsDiffer>
    <experiments>3</experiments>
</comment>
<comment type="interaction">
    <interactant intactId="EBI-2430095">
        <id>P12035</id>
    </interactant>
    <interactant intactId="EBI-743265">
        <id>Q9BUY5</id>
        <label>ZNF426</label>
    </interactant>
    <organismsDiffer>false</organismsDiffer>
    <experiments>3</experiments>
</comment>
<comment type="interaction">
    <interactant intactId="EBI-2430095">
        <id>P12035</id>
    </interactant>
    <interactant intactId="EBI-10177989">
        <id>G4XUV3</id>
    </interactant>
    <organismsDiffer>false</organismsDiffer>
    <experiments>3</experiments>
</comment>
<comment type="tissue specificity">
    <text>Cornea specific.</text>
</comment>
<comment type="disease" evidence="4 6">
    <disease id="DI-05754">
        <name>Corneal dystrophy, Meesmann 2</name>
        <acronym>MECD2</acronym>
        <description>A form of Meesmann corneal dystrophy, a corneal disease characterized by fragility of the anterior corneal epithelium. Histological examination shows a disorganized and thickened epithelium with widespread cytoplasmic vacuolation and numerous small, round, debris-laden intraepithelial cysts. Patients are usually asymptomatic until adulthood when rupture of the corneal microcysts may cause erosions, producing clinical symptoms such as photophobia, contact lens intolerance and intermittent diminution of visual acuity. Rarely, subepithelial scarring causes irregular corneal astigmatism and permanent visual impairment. MECD2 inheritance is autosomal dominant.</description>
        <dbReference type="MIM" id="618767"/>
    </disease>
    <text>The disease is caused by variants affecting the gene represented in this entry.</text>
</comment>
<comment type="miscellaneous">
    <text>There are two types of cytoskeletal and microfibrillar keratin: I (acidic; 40-55 kDa) and II (neutral to basic; 56-70 kDa).</text>
</comment>
<comment type="similarity">
    <text evidence="2">Belongs to the intermediate filament family.</text>
</comment>
<comment type="sequence caution" evidence="7">
    <conflict type="erroneous initiation">
        <sequence resource="EMBL-CDS" id="CAF31522"/>
    </conflict>
    <text>Truncated N-terminus.</text>
</comment>
<comment type="online information" name="Wikipedia">
    <link uri="https://en.wikipedia.org/wiki/Keratin_3"/>
    <text>Keratin-3 entry</text>
</comment>
<evidence type="ECO:0000250" key="1">
    <source>
        <dbReference type="UniProtKB" id="P04264"/>
    </source>
</evidence>
<evidence type="ECO:0000255" key="2">
    <source>
        <dbReference type="PROSITE-ProRule" id="PRU01188"/>
    </source>
</evidence>
<evidence type="ECO:0000256" key="3">
    <source>
        <dbReference type="SAM" id="MobiDB-lite"/>
    </source>
</evidence>
<evidence type="ECO:0000269" key="4">
    <source>
    </source>
</evidence>
<evidence type="ECO:0000269" key="5">
    <source>
    </source>
</evidence>
<evidence type="ECO:0000269" key="6">
    <source>
    </source>
</evidence>
<evidence type="ECO:0000305" key="7"/>
<proteinExistence type="evidence at protein level"/>
<accession>P12035</accession>
<accession>A6NIS2</accession>
<accession>Q701L8</accession>
<keyword id="KW-0175">Coiled coil</keyword>
<keyword id="KW-1212">Corneal dystrophy</keyword>
<keyword id="KW-0225">Disease variant</keyword>
<keyword id="KW-0403">Intermediate filament</keyword>
<keyword id="KW-0416">Keratin</keyword>
<keyword id="KW-0488">Methylation</keyword>
<keyword id="KW-0597">Phosphoprotein</keyword>
<keyword id="KW-1267">Proteomics identification</keyword>
<keyword id="KW-1185">Reference proteome</keyword>
<feature type="chain" id="PRO_0000063716" description="Keratin, type II cytoskeletal 3">
    <location>
        <begin position="1"/>
        <end position="628"/>
    </location>
</feature>
<feature type="domain" description="IF rod" evidence="2">
    <location>
        <begin position="198"/>
        <end position="513"/>
    </location>
</feature>
<feature type="region of interest" description="Head">
    <location>
        <begin position="1"/>
        <end position="197"/>
    </location>
</feature>
<feature type="region of interest" description="Disordered" evidence="3">
    <location>
        <begin position="1"/>
        <end position="21"/>
    </location>
</feature>
<feature type="region of interest" description="Coil 1A">
    <location>
        <begin position="198"/>
        <end position="233"/>
    </location>
</feature>
<feature type="region of interest" description="Linker 1">
    <location>
        <begin position="234"/>
        <end position="254"/>
    </location>
</feature>
<feature type="region of interest" description="Coil 1B">
    <location>
        <begin position="255"/>
        <end position="346"/>
    </location>
</feature>
<feature type="region of interest" description="Linker 12">
    <location>
        <begin position="347"/>
        <end position="370"/>
    </location>
</feature>
<feature type="region of interest" description="Coil 2">
    <location>
        <begin position="371"/>
        <end position="509"/>
    </location>
</feature>
<feature type="region of interest" description="Tail">
    <location>
        <begin position="510"/>
        <end position="628"/>
    </location>
</feature>
<feature type="region of interest" description="Disordered" evidence="3">
    <location>
        <begin position="605"/>
        <end position="628"/>
    </location>
</feature>
<feature type="compositionally biased region" description="Low complexity" evidence="3">
    <location>
        <begin position="617"/>
        <end position="628"/>
    </location>
</feature>
<feature type="modified residue" description="Phosphoserine" evidence="1">
    <location>
        <position position="13"/>
    </location>
</feature>
<feature type="modified residue" description="Phosphoserine" evidence="1">
    <location>
        <position position="56"/>
    </location>
</feature>
<feature type="modified residue" description="N6,N6-dimethyllysine" evidence="1">
    <location>
        <position position="296"/>
    </location>
</feature>
<feature type="modified residue" description="Phosphoserine" evidence="1">
    <location>
        <position position="364"/>
    </location>
</feature>
<feature type="sequence variant" id="VAR_061297" description="In dbSNP:rs28721426.">
    <original>G</original>
    <variation>A</variation>
    <location>
        <position position="44"/>
    </location>
</feature>
<feature type="sequence variant" id="VAR_056023" description="In dbSNP:rs3887954." evidence="5">
    <original>R</original>
    <variation>G</variation>
    <location>
        <position position="375"/>
    </location>
</feature>
<feature type="sequence variant" id="VAR_031327" description="In MECD2; dbSNP:rs60410063." evidence="4">
    <original>R</original>
    <variation>P</variation>
    <location>
        <position position="503"/>
    </location>
</feature>
<feature type="sequence variant" id="VAR_003868" description="In MECD2; dbSNP:rs57872071." evidence="6">
    <original>E</original>
    <variation>K</variation>
    <location>
        <position position="509"/>
    </location>
</feature>
<feature type="sequence conflict" description="In Ref. 1; CAA28991." evidence="7" ref="1">
    <original>G</original>
    <variation>A</variation>
    <location>
        <position position="162"/>
    </location>
</feature>
<feature type="sequence conflict" description="In Ref. 1; CAA28991." evidence="7" ref="1">
    <original>I</original>
    <variation>T</variation>
    <location>
        <position position="175"/>
    </location>
</feature>
<feature type="sequence conflict" description="In Ref. 1; CAA28991." evidence="7" ref="1">
    <original>N</original>
    <variation>K</variation>
    <location>
        <position position="184"/>
    </location>
</feature>
<feature type="sequence conflict" description="In Ref. 1; CAA28991." evidence="7" ref="1">
    <original>I</original>
    <variation>T</variation>
    <location>
        <position position="187"/>
    </location>
</feature>
<feature type="sequence conflict" description="In Ref. 1; CAA28993." evidence="7" ref="1">
    <original>T</original>
    <variation>Y</variation>
    <location>
        <position position="298"/>
    </location>
</feature>
<feature type="sequence conflict" description="In Ref. 1; CAA28996." evidence="7" ref="1">
    <original>L</original>
    <variation>M</variation>
    <location>
        <position position="397"/>
    </location>
</feature>
<feature type="sequence conflict" description="In Ref. 3; CAF31522." evidence="7" ref="3">
    <original>D</original>
    <variation>G</variation>
    <location>
        <position position="409"/>
    </location>
</feature>
<feature type="sequence conflict" description="In Ref. 1; CAA28996." evidence="7" ref="1">
    <original>E</original>
    <variation>Q</variation>
    <location>
        <position position="448"/>
    </location>
</feature>
<feature type="sequence conflict" description="In Ref. 1; CAA28996." evidence="7" ref="1">
    <original>Y</original>
    <variation>YS</variation>
    <location>
        <position position="511"/>
    </location>
</feature>
<feature type="sequence conflict" description="In Ref. 1; CAA28996." evidence="7" ref="1">
    <original>S</original>
    <variation>I</variation>
    <location>
        <position position="562"/>
    </location>
</feature>
<feature type="sequence conflict" description="In Ref. 1; CAA28996." evidence="7" ref="1">
    <original>S</original>
    <variation>T</variation>
    <location>
        <position position="580"/>
    </location>
</feature>
<protein>
    <recommendedName>
        <fullName>Keratin, type II cytoskeletal 3</fullName>
    </recommendedName>
    <alternativeName>
        <fullName>65 kDa cytokeratin</fullName>
    </alternativeName>
    <alternativeName>
        <fullName>Cytokeratin-3</fullName>
        <shortName>CK-3</shortName>
    </alternativeName>
    <alternativeName>
        <fullName>Keratin-3</fullName>
        <shortName>K3</shortName>
    </alternativeName>
    <alternativeName>
        <fullName>Type-II keratin Kb3</fullName>
    </alternativeName>
</protein>
<sequence length="628" mass="64417">MSRQASKTSGGGSQGFSGRSAVVSGSSRMSCVAHSGGAGGGAYGFRSGAGGFGSRSLYNLGGNKSISISVAAGGSRAGGFGGGRSSCAFAGGYGGGFGSGYGGGFGGGFGGGRGMGGGFGGAGGFGGAGGFGGAGGFGGPGGFGGSGGFGGPGSLGSPGGFGPGGFPGGIQEVTINQSLLQPLNVEIDPQIGQVKAQEREQIKTLNNKFASFIDKVRFLEQQNKVLETKWNLLQQQGTSSISGTNNLEPLFENHINYLRSYLDNILGERGRLDSELKNMEDLVEDFKKKYEDEINKRTAAENEFVTLKKDVDSAYMNKVELQAKVDALIDEIDFLRTLYDAELSQMQSHISDTSVVLSMDNNRSLDLDSIIAEVRAQYEDIAQRSKAEAEALYQTKLGELQTTAGRHGDDLRNTKSEIIELNRMIQRLRAEIEGVKKQNANLQTAIAEAEQHGEMALKDANAKLQELQAALQQAKDDLARLLRDYQELMNVKLALDVEIATYRKLLEGEEYRMSGECPSAVSISVVSSSTTSASAGGYGGGYGGGMGGGLGGGFSAGGGSGSGFGRGGGGGIGGGFGGGSSGFSGGSGFGSISGARYGVSGGGFSSASNRGGSIKFSQSSQSSQRYSR</sequence>
<gene>
    <name type="primary">KRT3</name>
</gene>
<name>K2C3_HUMAN</name>
<dbReference type="EMBL" id="X05418">
    <property type="protein sequence ID" value="CAA28991.1"/>
    <property type="molecule type" value="Genomic_DNA"/>
</dbReference>
<dbReference type="EMBL" id="X05419">
    <property type="protein sequence ID" value="CAA28992.1"/>
    <property type="molecule type" value="Genomic_DNA"/>
</dbReference>
<dbReference type="EMBL" id="X05420">
    <property type="protein sequence ID" value="CAA28993.1"/>
    <property type="molecule type" value="Genomic_DNA"/>
</dbReference>
<dbReference type="EMBL" id="X05420">
    <property type="protein sequence ID" value="CAA28994.1"/>
    <property type="molecule type" value="Genomic_DNA"/>
</dbReference>
<dbReference type="EMBL" id="X05420">
    <property type="protein sequence ID" value="CAA28995.1"/>
    <property type="molecule type" value="Genomic_DNA"/>
</dbReference>
<dbReference type="EMBL" id="X05421">
    <property type="protein sequence ID" value="CAA28996.1"/>
    <property type="molecule type" value="Genomic_DNA"/>
</dbReference>
<dbReference type="EMBL" id="AC107016">
    <property type="status" value="NOT_ANNOTATED_CDS"/>
    <property type="molecule type" value="Genomic_DNA"/>
</dbReference>
<dbReference type="EMBL" id="AJ628418">
    <property type="protein sequence ID" value="CAF31522.1"/>
    <property type="status" value="ALT_INIT"/>
    <property type="molecule type" value="mRNA"/>
</dbReference>
<dbReference type="CCDS" id="CCDS44895.1"/>
<dbReference type="PIR" id="A29666">
    <property type="entry name" value="A29666"/>
</dbReference>
<dbReference type="RefSeq" id="NP_476429.2">
    <property type="nucleotide sequence ID" value="NM_057088.3"/>
</dbReference>
<dbReference type="SMR" id="P12035"/>
<dbReference type="BioGRID" id="110048">
    <property type="interactions" value="106"/>
</dbReference>
<dbReference type="FunCoup" id="P12035">
    <property type="interactions" value="86"/>
</dbReference>
<dbReference type="IntAct" id="P12035">
    <property type="interactions" value="53"/>
</dbReference>
<dbReference type="STRING" id="9606.ENSP00000413479"/>
<dbReference type="GlyGen" id="P12035">
    <property type="glycosylation" value="1 site, 1 O-linked glycan (1 site)"/>
</dbReference>
<dbReference type="iPTMnet" id="P12035"/>
<dbReference type="PhosphoSitePlus" id="P12035"/>
<dbReference type="SwissPalm" id="P12035"/>
<dbReference type="BioMuta" id="KRT3"/>
<dbReference type="DMDM" id="313104225"/>
<dbReference type="jPOST" id="P12035"/>
<dbReference type="MassIVE" id="P12035"/>
<dbReference type="PaxDb" id="9606-ENSP00000413479"/>
<dbReference type="PeptideAtlas" id="P12035"/>
<dbReference type="PRIDE" id="P12035"/>
<dbReference type="ProteomicsDB" id="52820"/>
<dbReference type="Antibodypedia" id="7889">
    <property type="antibodies" value="180 antibodies from 28 providers"/>
</dbReference>
<dbReference type="DNASU" id="3850"/>
<dbReference type="Ensembl" id="ENST00000417996.2">
    <property type="protein sequence ID" value="ENSP00000413479.2"/>
    <property type="gene ID" value="ENSG00000186442.7"/>
</dbReference>
<dbReference type="GeneID" id="3850"/>
<dbReference type="KEGG" id="hsa:3850"/>
<dbReference type="MANE-Select" id="ENST00000417996.2">
    <property type="protein sequence ID" value="ENSP00000413479.2"/>
    <property type="RefSeq nucleotide sequence ID" value="NM_057088.3"/>
    <property type="RefSeq protein sequence ID" value="NP_476429.2"/>
</dbReference>
<dbReference type="UCSC" id="uc001say.4">
    <property type="organism name" value="human"/>
</dbReference>
<dbReference type="AGR" id="HGNC:6440"/>
<dbReference type="CTD" id="3850"/>
<dbReference type="DisGeNET" id="3850"/>
<dbReference type="GeneCards" id="KRT3"/>
<dbReference type="HGNC" id="HGNC:6440">
    <property type="gene designation" value="KRT3"/>
</dbReference>
<dbReference type="HPA" id="ENSG00000186442">
    <property type="expression patterns" value="Group enriched (esophagus, salivary gland)"/>
</dbReference>
<dbReference type="MalaCards" id="KRT3"/>
<dbReference type="MIM" id="148043">
    <property type="type" value="gene"/>
</dbReference>
<dbReference type="MIM" id="618767">
    <property type="type" value="phenotype"/>
</dbReference>
<dbReference type="neXtProt" id="NX_P12035"/>
<dbReference type="OpenTargets" id="ENSG00000186442"/>
<dbReference type="Orphanet" id="98954">
    <property type="disease" value="Meesmann corneal dystrophy"/>
</dbReference>
<dbReference type="PharmGKB" id="PA30228"/>
<dbReference type="VEuPathDB" id="HostDB:ENSG00000186442"/>
<dbReference type="eggNOG" id="ENOG502QURK">
    <property type="taxonomic scope" value="Eukaryota"/>
</dbReference>
<dbReference type="GeneTree" id="ENSGT00940000162629"/>
<dbReference type="HOGENOM" id="CLU_012560_6_0_1"/>
<dbReference type="InParanoid" id="P12035"/>
<dbReference type="OMA" id="XLGELQT"/>
<dbReference type="OrthoDB" id="2441647at2759"/>
<dbReference type="PAN-GO" id="P12035">
    <property type="GO annotations" value="4 GO annotations based on evolutionary models"/>
</dbReference>
<dbReference type="PhylomeDB" id="P12035"/>
<dbReference type="TreeFam" id="TF332742"/>
<dbReference type="PathwayCommons" id="P12035"/>
<dbReference type="Reactome" id="R-HSA-6805567">
    <property type="pathway name" value="Keratinization"/>
</dbReference>
<dbReference type="Reactome" id="R-HSA-6809371">
    <property type="pathway name" value="Formation of the cornified envelope"/>
</dbReference>
<dbReference type="SignaLink" id="P12035"/>
<dbReference type="BioGRID-ORCS" id="3850">
    <property type="hits" value="11 hits in 1143 CRISPR screens"/>
</dbReference>
<dbReference type="GeneWiki" id="Keratin_3"/>
<dbReference type="GenomeRNAi" id="3850"/>
<dbReference type="Pharos" id="P12035">
    <property type="development level" value="Tbio"/>
</dbReference>
<dbReference type="PRO" id="PR:P12035"/>
<dbReference type="Proteomes" id="UP000005640">
    <property type="component" value="Chromosome 12"/>
</dbReference>
<dbReference type="RNAct" id="P12035">
    <property type="molecule type" value="protein"/>
</dbReference>
<dbReference type="Bgee" id="ENSG00000186442">
    <property type="expression patterns" value="Expressed in gingiva and 23 other cell types or tissues"/>
</dbReference>
<dbReference type="GO" id="GO:0005829">
    <property type="term" value="C:cytosol"/>
    <property type="evidence" value="ECO:0000304"/>
    <property type="project" value="Reactome"/>
</dbReference>
<dbReference type="GO" id="GO:0070062">
    <property type="term" value="C:extracellular exosome"/>
    <property type="evidence" value="ECO:0007005"/>
    <property type="project" value="UniProtKB"/>
</dbReference>
<dbReference type="GO" id="GO:0005882">
    <property type="term" value="C:intermediate filament"/>
    <property type="evidence" value="ECO:0000303"/>
    <property type="project" value="UniProtKB"/>
</dbReference>
<dbReference type="GO" id="GO:0045095">
    <property type="term" value="C:keratin filament"/>
    <property type="evidence" value="ECO:0000318"/>
    <property type="project" value="GO_Central"/>
</dbReference>
<dbReference type="GO" id="GO:0030280">
    <property type="term" value="F:structural constituent of skin epidermis"/>
    <property type="evidence" value="ECO:0000318"/>
    <property type="project" value="GO_Central"/>
</dbReference>
<dbReference type="GO" id="GO:0030855">
    <property type="term" value="P:epithelial cell differentiation"/>
    <property type="evidence" value="ECO:0000250"/>
    <property type="project" value="UniProtKB"/>
</dbReference>
<dbReference type="GO" id="GO:0045104">
    <property type="term" value="P:intermediate filament cytoskeleton organization"/>
    <property type="evidence" value="ECO:0000315"/>
    <property type="project" value="UniProtKB"/>
</dbReference>
<dbReference type="GO" id="GO:0045109">
    <property type="term" value="P:intermediate filament organization"/>
    <property type="evidence" value="ECO:0000318"/>
    <property type="project" value="GO_Central"/>
</dbReference>
<dbReference type="GO" id="GO:0031424">
    <property type="term" value="P:keratinization"/>
    <property type="evidence" value="ECO:0000318"/>
    <property type="project" value="GO_Central"/>
</dbReference>
<dbReference type="FunFam" id="1.20.5.1160:FF:000001">
    <property type="entry name" value="Keratin type II"/>
    <property type="match status" value="1"/>
</dbReference>
<dbReference type="FunFam" id="1.20.5.170:FF:000004">
    <property type="entry name" value="Keratin, type II cytoskeletal 5"/>
    <property type="match status" value="1"/>
</dbReference>
<dbReference type="FunFam" id="1.20.5.500:FF:000001">
    <property type="entry name" value="Type II keratin 23"/>
    <property type="match status" value="1"/>
</dbReference>
<dbReference type="Gene3D" id="1.20.5.170">
    <property type="match status" value="1"/>
</dbReference>
<dbReference type="Gene3D" id="1.20.5.500">
    <property type="entry name" value="Single helix bin"/>
    <property type="match status" value="1"/>
</dbReference>
<dbReference type="Gene3D" id="1.20.5.1160">
    <property type="entry name" value="Vasodilator-stimulated phosphoprotein"/>
    <property type="match status" value="1"/>
</dbReference>
<dbReference type="InterPro" id="IPR018039">
    <property type="entry name" value="IF_conserved"/>
</dbReference>
<dbReference type="InterPro" id="IPR039008">
    <property type="entry name" value="IF_rod_dom"/>
</dbReference>
<dbReference type="InterPro" id="IPR032444">
    <property type="entry name" value="Keratin_2_head"/>
</dbReference>
<dbReference type="InterPro" id="IPR003054">
    <property type="entry name" value="Keratin_II"/>
</dbReference>
<dbReference type="PANTHER" id="PTHR45616">
    <property type="entry name" value="GATA-TYPE DOMAIN-CONTAINING PROTEIN"/>
    <property type="match status" value="1"/>
</dbReference>
<dbReference type="PANTHER" id="PTHR45616:SF38">
    <property type="entry name" value="KERATIN, TYPE II CYTOSKELETAL 3"/>
    <property type="match status" value="1"/>
</dbReference>
<dbReference type="Pfam" id="PF00038">
    <property type="entry name" value="Filament"/>
    <property type="match status" value="1"/>
</dbReference>
<dbReference type="Pfam" id="PF16208">
    <property type="entry name" value="Keratin_2_head"/>
    <property type="match status" value="2"/>
</dbReference>
<dbReference type="PRINTS" id="PR01276">
    <property type="entry name" value="TYPE2KERATIN"/>
</dbReference>
<dbReference type="SMART" id="SM01391">
    <property type="entry name" value="Filament"/>
    <property type="match status" value="1"/>
</dbReference>
<dbReference type="SUPFAM" id="SSF64593">
    <property type="entry name" value="Intermediate filament protein, coiled coil region"/>
    <property type="match status" value="3"/>
</dbReference>
<dbReference type="PROSITE" id="PS00226">
    <property type="entry name" value="IF_ROD_1"/>
    <property type="match status" value="1"/>
</dbReference>
<dbReference type="PROSITE" id="PS51842">
    <property type="entry name" value="IF_ROD_2"/>
    <property type="match status" value="1"/>
</dbReference>
<reference key="1">
    <citation type="journal article" date="1987" name="J. Mol. Evol.">
        <title>Evolution of keratin genes: different protein domains evolve by different pathways.</title>
        <authorList>
            <person name="Klinge E.M."/>
            <person name="Sylvestre Y.R."/>
            <person name="Freedberg I.M."/>
            <person name="Blumenberg M."/>
        </authorList>
    </citation>
    <scope>NUCLEOTIDE SEQUENCE [GENOMIC DNA]</scope>
    <scope>VARIANT GLY-375</scope>
</reference>
<reference key="2">
    <citation type="journal article" date="2006" name="Nature">
        <title>The finished DNA sequence of human chromosome 12.</title>
        <authorList>
            <person name="Scherer S.E."/>
            <person name="Muzny D.M."/>
            <person name="Buhay C.J."/>
            <person name="Chen R."/>
            <person name="Cree A."/>
            <person name="Ding Y."/>
            <person name="Dugan-Rocha S."/>
            <person name="Gill R."/>
            <person name="Gunaratne P."/>
            <person name="Harris R.A."/>
            <person name="Hawes A.C."/>
            <person name="Hernandez J."/>
            <person name="Hodgson A.V."/>
            <person name="Hume J."/>
            <person name="Jackson A."/>
            <person name="Khan Z.M."/>
            <person name="Kovar-Smith C."/>
            <person name="Lewis L.R."/>
            <person name="Lozado R.J."/>
            <person name="Metzker M.L."/>
            <person name="Milosavljevic A."/>
            <person name="Miner G.R."/>
            <person name="Montgomery K.T."/>
            <person name="Morgan M.B."/>
            <person name="Nazareth L.V."/>
            <person name="Scott G."/>
            <person name="Sodergren E."/>
            <person name="Song X.-Z."/>
            <person name="Steffen D."/>
            <person name="Lovering R.C."/>
            <person name="Wheeler D.A."/>
            <person name="Worley K.C."/>
            <person name="Yuan Y."/>
            <person name="Zhang Z."/>
            <person name="Adams C.Q."/>
            <person name="Ansari-Lari M.A."/>
            <person name="Ayele M."/>
            <person name="Brown M.J."/>
            <person name="Chen G."/>
            <person name="Chen Z."/>
            <person name="Clerc-Blankenburg K.P."/>
            <person name="Davis C."/>
            <person name="Delgado O."/>
            <person name="Dinh H.H."/>
            <person name="Draper H."/>
            <person name="Gonzalez-Garay M.L."/>
            <person name="Havlak P."/>
            <person name="Jackson L.R."/>
            <person name="Jacob L.S."/>
            <person name="Kelly S.H."/>
            <person name="Li L."/>
            <person name="Li Z."/>
            <person name="Liu J."/>
            <person name="Liu W."/>
            <person name="Lu J."/>
            <person name="Maheshwari M."/>
            <person name="Nguyen B.-V."/>
            <person name="Okwuonu G.O."/>
            <person name="Pasternak S."/>
            <person name="Perez L.M."/>
            <person name="Plopper F.J.H."/>
            <person name="Santibanez J."/>
            <person name="Shen H."/>
            <person name="Tabor P.E."/>
            <person name="Verduzco D."/>
            <person name="Waldron L."/>
            <person name="Wang Q."/>
            <person name="Williams G.A."/>
            <person name="Zhang J."/>
            <person name="Zhou J."/>
            <person name="Allen C.C."/>
            <person name="Amin A.G."/>
            <person name="Anyalebechi V."/>
            <person name="Bailey M."/>
            <person name="Barbaria J.A."/>
            <person name="Bimage K.E."/>
            <person name="Bryant N.P."/>
            <person name="Burch P.E."/>
            <person name="Burkett C.E."/>
            <person name="Burrell K.L."/>
            <person name="Calderon E."/>
            <person name="Cardenas V."/>
            <person name="Carter K."/>
            <person name="Casias K."/>
            <person name="Cavazos I."/>
            <person name="Cavazos S.R."/>
            <person name="Ceasar H."/>
            <person name="Chacko J."/>
            <person name="Chan S.N."/>
            <person name="Chavez D."/>
            <person name="Christopoulos C."/>
            <person name="Chu J."/>
            <person name="Cockrell R."/>
            <person name="Cox C.D."/>
            <person name="Dang M."/>
            <person name="Dathorne S.R."/>
            <person name="David R."/>
            <person name="Davis C.M."/>
            <person name="Davy-Carroll L."/>
            <person name="Deshazo D.R."/>
            <person name="Donlin J.E."/>
            <person name="D'Souza L."/>
            <person name="Eaves K.A."/>
            <person name="Egan A."/>
            <person name="Emery-Cohen A.J."/>
            <person name="Escotto M."/>
            <person name="Flagg N."/>
            <person name="Forbes L.D."/>
            <person name="Gabisi A.M."/>
            <person name="Garza M."/>
            <person name="Hamilton C."/>
            <person name="Henderson N."/>
            <person name="Hernandez O."/>
            <person name="Hines S."/>
            <person name="Hogues M.E."/>
            <person name="Huang M."/>
            <person name="Idlebird D.G."/>
            <person name="Johnson R."/>
            <person name="Jolivet A."/>
            <person name="Jones S."/>
            <person name="Kagan R."/>
            <person name="King L.M."/>
            <person name="Leal B."/>
            <person name="Lebow H."/>
            <person name="Lee S."/>
            <person name="LeVan J.M."/>
            <person name="Lewis L.C."/>
            <person name="London P."/>
            <person name="Lorensuhewa L.M."/>
            <person name="Loulseged H."/>
            <person name="Lovett D.A."/>
            <person name="Lucier A."/>
            <person name="Lucier R.L."/>
            <person name="Ma J."/>
            <person name="Madu R.C."/>
            <person name="Mapua P."/>
            <person name="Martindale A.D."/>
            <person name="Martinez E."/>
            <person name="Massey E."/>
            <person name="Mawhiney S."/>
            <person name="Meador M.G."/>
            <person name="Mendez S."/>
            <person name="Mercado C."/>
            <person name="Mercado I.C."/>
            <person name="Merritt C.E."/>
            <person name="Miner Z.L."/>
            <person name="Minja E."/>
            <person name="Mitchell T."/>
            <person name="Mohabbat F."/>
            <person name="Mohabbat K."/>
            <person name="Montgomery B."/>
            <person name="Moore N."/>
            <person name="Morris S."/>
            <person name="Munidasa M."/>
            <person name="Ngo R.N."/>
            <person name="Nguyen N.B."/>
            <person name="Nickerson E."/>
            <person name="Nwaokelemeh O.O."/>
            <person name="Nwokenkwo S."/>
            <person name="Obregon M."/>
            <person name="Oguh M."/>
            <person name="Oragunye N."/>
            <person name="Oviedo R.J."/>
            <person name="Parish B.J."/>
            <person name="Parker D.N."/>
            <person name="Parrish J."/>
            <person name="Parks K.L."/>
            <person name="Paul H.A."/>
            <person name="Payton B.A."/>
            <person name="Perez A."/>
            <person name="Perrin W."/>
            <person name="Pickens A."/>
            <person name="Primus E.L."/>
            <person name="Pu L.-L."/>
            <person name="Puazo M."/>
            <person name="Quiles M.M."/>
            <person name="Quiroz J.B."/>
            <person name="Rabata D."/>
            <person name="Reeves K."/>
            <person name="Ruiz S.J."/>
            <person name="Shao H."/>
            <person name="Sisson I."/>
            <person name="Sonaike T."/>
            <person name="Sorelle R.P."/>
            <person name="Sutton A.E."/>
            <person name="Svatek A.F."/>
            <person name="Svetz L.A."/>
            <person name="Tamerisa K.S."/>
            <person name="Taylor T.R."/>
            <person name="Teague B."/>
            <person name="Thomas N."/>
            <person name="Thorn R.D."/>
            <person name="Trejos Z.Y."/>
            <person name="Trevino B.K."/>
            <person name="Ukegbu O.N."/>
            <person name="Urban J.B."/>
            <person name="Vasquez L.I."/>
            <person name="Vera V.A."/>
            <person name="Villasana D.M."/>
            <person name="Wang L."/>
            <person name="Ward-Moore S."/>
            <person name="Warren J.T."/>
            <person name="Wei X."/>
            <person name="White F."/>
            <person name="Williamson A.L."/>
            <person name="Wleczyk R."/>
            <person name="Wooden H.S."/>
            <person name="Wooden S.H."/>
            <person name="Yen J."/>
            <person name="Yoon L."/>
            <person name="Yoon V."/>
            <person name="Zorrilla S.E."/>
            <person name="Nelson D."/>
            <person name="Kucherlapati R."/>
            <person name="Weinstock G."/>
            <person name="Gibbs R.A."/>
        </authorList>
    </citation>
    <scope>NUCLEOTIDE SEQUENCE [LARGE SCALE GENOMIC DNA]</scope>
</reference>
<reference key="3">
    <citation type="journal article" date="2005" name="J. Invest. Dermatol.">
        <title>Characterization of new members of the human type II keratin gene family and a general evaluation of the keratin gene domain on chromosome 12q13.13.</title>
        <authorList>
            <person name="Rogers M.A."/>
            <person name="Edler L."/>
            <person name="Winter H."/>
            <person name="Langbein L."/>
            <person name="Beckmann I."/>
            <person name="Schweizer J."/>
        </authorList>
    </citation>
    <scope>NUCLEOTIDE SEQUENCE [MRNA] OF 16-628</scope>
    <source>
        <tissue>Eye</tissue>
    </source>
</reference>
<reference key="4">
    <citation type="journal article" date="1997" name="Nat. Genet.">
        <title>Mutations in cornea-specific keratin K3 or K12 genes cause Meesmann's corneal dystrophy.</title>
        <authorList>
            <person name="Irvine A.D."/>
            <person name="Corden L.D."/>
            <person name="Swensson O."/>
            <person name="Swensson B."/>
            <person name="Moore J.E."/>
            <person name="Frazer D.G."/>
            <person name="Smith F.J.D."/>
            <person name="Knowlton R.G."/>
            <person name="Christophers E."/>
            <person name="Rochels R."/>
            <person name="Uitto J."/>
            <person name="McLean W.H.I."/>
        </authorList>
    </citation>
    <scope>VARIANT MECD2 LYS-509</scope>
    <scope>INVOLVEMENT IN MECD2</scope>
</reference>
<reference key="5">
    <citation type="journal article" date="2005" name="Cornea">
        <title>Novel mutations in the helix termination motif of keratin 3 and keratin 12 in 2 Taiwanese families with Meesmann corneal dystrophy.</title>
        <authorList>
            <person name="Chen Y.T."/>
            <person name="Tseng S.H."/>
            <person name="Chao S.C."/>
        </authorList>
    </citation>
    <scope>VARIANT MECD2 PRO-503</scope>
    <scope>INVOLVEMENT IN MECD2</scope>
</reference>
<organism>
    <name type="scientific">Homo sapiens</name>
    <name type="common">Human</name>
    <dbReference type="NCBI Taxonomy" id="9606"/>
    <lineage>
        <taxon>Eukaryota</taxon>
        <taxon>Metazoa</taxon>
        <taxon>Chordata</taxon>
        <taxon>Craniata</taxon>
        <taxon>Vertebrata</taxon>
        <taxon>Euteleostomi</taxon>
        <taxon>Mammalia</taxon>
        <taxon>Eutheria</taxon>
        <taxon>Euarchontoglires</taxon>
        <taxon>Primates</taxon>
        <taxon>Haplorrhini</taxon>
        <taxon>Catarrhini</taxon>
        <taxon>Hominidae</taxon>
        <taxon>Homo</taxon>
    </lineage>
</organism>